<accession>P49261</accession>
<proteinExistence type="evidence at protein level"/>
<keyword id="KW-0903">Direct protein sequencing</keyword>
<keyword id="KW-0273">Eye lens protein</keyword>
<organism>
    <name type="scientific">Lepidodactylus lugubris</name>
    <name type="common">Mourning gecko</name>
    <name type="synonym">Platydactylus lugubris</name>
    <dbReference type="NCBI Taxonomy" id="47724"/>
    <lineage>
        <taxon>Eukaryota</taxon>
        <taxon>Metazoa</taxon>
        <taxon>Chordata</taxon>
        <taxon>Craniata</taxon>
        <taxon>Vertebrata</taxon>
        <taxon>Euteleostomi</taxon>
        <taxon>Lepidosauria</taxon>
        <taxon>Squamata</taxon>
        <taxon>Bifurcata</taxon>
        <taxon>Gekkota</taxon>
        <taxon>Gekkonidae</taxon>
        <taxon>Gekkoninae</taxon>
        <taxon>Lepidodactylus</taxon>
    </lineage>
</organism>
<reference key="1">
    <citation type="journal article" date="1995" name="Biochem. Biophys. Res. Commun.">
        <title>Rho B-crystallin, an aldose reductase-like lens protein in the gecko Lepidodactylus lugubris.</title>
        <authorList>
            <person name="Roell B."/>
            <person name="van Boekel M.A.M."/>
            <person name="Amons R."/>
            <person name="de Jong W.W."/>
        </authorList>
    </citation>
    <scope>PROTEIN SEQUENCE</scope>
    <source>
        <tissue>Lens</tissue>
    </source>
</reference>
<dbReference type="GO" id="GO:0016491">
    <property type="term" value="F:oxidoreductase activity"/>
    <property type="evidence" value="ECO:0007669"/>
    <property type="project" value="InterPro"/>
</dbReference>
<dbReference type="GO" id="GO:0005212">
    <property type="term" value="F:structural constituent of eye lens"/>
    <property type="evidence" value="ECO:0007669"/>
    <property type="project" value="UniProtKB-KW"/>
</dbReference>
<dbReference type="Gene3D" id="3.20.20.100">
    <property type="entry name" value="NADP-dependent oxidoreductase domain"/>
    <property type="match status" value="1"/>
</dbReference>
<dbReference type="InterPro" id="IPR020471">
    <property type="entry name" value="AKR"/>
</dbReference>
<dbReference type="InterPro" id="IPR023210">
    <property type="entry name" value="NADP_OxRdtase_dom"/>
</dbReference>
<dbReference type="InterPro" id="IPR036812">
    <property type="entry name" value="NADP_OxRdtase_dom_sf"/>
</dbReference>
<dbReference type="PANTHER" id="PTHR11732">
    <property type="entry name" value="ALDO/KETO REDUCTASE"/>
    <property type="match status" value="1"/>
</dbReference>
<dbReference type="Pfam" id="PF00248">
    <property type="entry name" value="Aldo_ket_red"/>
    <property type="match status" value="1"/>
</dbReference>
<dbReference type="PRINTS" id="PR00069">
    <property type="entry name" value="ALDKETRDTASE"/>
</dbReference>
<dbReference type="SUPFAM" id="SSF51430">
    <property type="entry name" value="NAD(P)-linked oxidoreductase"/>
    <property type="match status" value="1"/>
</dbReference>
<evidence type="ECO:0000250" key="1"/>
<evidence type="ECO:0000305" key="2"/>
<feature type="chain" id="PRO_0000124615" description="Rho beta-crystallin">
    <location>
        <begin position="1"/>
        <end position="89"/>
    </location>
</feature>
<feature type="binding site" evidence="1">
    <location>
        <position position="31"/>
    </location>
    <ligand>
        <name>substrate</name>
    </ligand>
</feature>
<feature type="non-consecutive residues" evidence="2">
    <location>
        <begin position="31"/>
        <end position="32"/>
    </location>
</feature>
<feature type="non-consecutive residues" evidence="2">
    <location>
        <begin position="37"/>
        <end position="38"/>
    </location>
</feature>
<feature type="non-consecutive residues" evidence="2">
    <location>
        <begin position="62"/>
        <end position="63"/>
    </location>
</feature>
<feature type="non-consecutive residues" evidence="2">
    <location>
        <begin position="81"/>
        <end position="82"/>
    </location>
</feature>
<name>CROB_LEPLU</name>
<protein>
    <recommendedName>
        <fullName>Rho beta-crystallin</fullName>
    </recommendedName>
</protein>
<sequence length="89" mass="10228">MPILGLGTWQAPPGKVEKAIKLDYLDLYLIHFPMGFKVIPSNTDIRDTWEGMEDLVDAGLVKYTSLIEDPXVKKIADKYNKEYPFHVDY</sequence>
<comment type="subunit">
    <text>Monomer.</text>
</comment>
<comment type="similarity">
    <text evidence="2">Belongs to the aldo/keto reductase family.</text>
</comment>